<gene>
    <name evidence="1" type="primary">katG</name>
    <name type="ORF">An01g01830</name>
</gene>
<organism>
    <name type="scientific">Aspergillus niger (strain ATCC MYA-4892 / CBS 513.88 / FGSC A1513)</name>
    <dbReference type="NCBI Taxonomy" id="425011"/>
    <lineage>
        <taxon>Eukaryota</taxon>
        <taxon>Fungi</taxon>
        <taxon>Dikarya</taxon>
        <taxon>Ascomycota</taxon>
        <taxon>Pezizomycotina</taxon>
        <taxon>Eurotiomycetes</taxon>
        <taxon>Eurotiomycetidae</taxon>
        <taxon>Eurotiales</taxon>
        <taxon>Aspergillaceae</taxon>
        <taxon>Aspergillus</taxon>
        <taxon>Aspergillus subgen. Circumdati</taxon>
    </lineage>
</organism>
<proteinExistence type="inferred from homology"/>
<sequence length="762" mass="84251">MAEAKCPFSQSRSNANVAGGGTRNTDWWPDQLNLGILRQHAPASNPFERDFDYTAAFNSLDYYALKKDLHALMTDSQDWWPADFGHYGGLFIRMAWHSAGTYRVFDGRGGGGQGQQRFAPLNSWPDNASLDKARRLLWPIKQKYGAKISWADLMLLAGNVALESMGFKTYGFSGGRADTWEADESVYWGGESTWMGNDVRYSDGFPGVTKHGALSGDEPPHRNIHTRDLEKPLAASHMGLIYVNPEGPDGNPDPVAAARDIRTTFGRMGMNDEETVALIAGGHSFGKTHGAASSENVDVEPAAAGLENQGLGWSNRYQSGKGPHTITSGIEVTWTKTPTKWSHAFLEYLFRFDWELTKSPGGANQWQAKNTEAIIPDAYDPSKKHLPKMLTTDLSLRYDPAYEKIARRFLDHPDEFADAFSRAWFKLLHRDMGPRTRYIGPEAPTEDLIWQDPIPAVNHTLVDANDIAALKRTILDTGLNKSNFVSTAWASASTFRGTDKRGGANGARIRLAPQRQWEVNNQPWLEETLSALEKIQKDFNDRVSSTGKKISLADLIVLAGCAAVEKAAQEAGQTITVPFTPGRMDASQEQTEVESFSHLEPVADGFRNYGKSSSRVRAEHYLVDKAHLLTLTAPEMTVLVGGLRVLNTNYDGSKHGVLTSSPGRLTNDFFTNVLDMNTAWKAKDGGRDLYEGTDRKTGQPKWTATRADLVFGSHAELRALAEVYGSSDGQEKFVKDFVSAWDKVMNLDRFDLKGSGIARSKL</sequence>
<accession>A2Q7T1</accession>
<reference key="1">
    <citation type="journal article" date="2007" name="Nat. Biotechnol.">
        <title>Genome sequencing and analysis of the versatile cell factory Aspergillus niger CBS 513.88.</title>
        <authorList>
            <person name="Pel H.J."/>
            <person name="de Winde J.H."/>
            <person name="Archer D.B."/>
            <person name="Dyer P.S."/>
            <person name="Hofmann G."/>
            <person name="Schaap P.J."/>
            <person name="Turner G."/>
            <person name="de Vries R.P."/>
            <person name="Albang R."/>
            <person name="Albermann K."/>
            <person name="Andersen M.R."/>
            <person name="Bendtsen J.D."/>
            <person name="Benen J.A.E."/>
            <person name="van den Berg M."/>
            <person name="Breestraat S."/>
            <person name="Caddick M.X."/>
            <person name="Contreras R."/>
            <person name="Cornell M."/>
            <person name="Coutinho P.M."/>
            <person name="Danchin E.G.J."/>
            <person name="Debets A.J.M."/>
            <person name="Dekker P."/>
            <person name="van Dijck P.W.M."/>
            <person name="van Dijk A."/>
            <person name="Dijkhuizen L."/>
            <person name="Driessen A.J.M."/>
            <person name="d'Enfert C."/>
            <person name="Geysens S."/>
            <person name="Goosen C."/>
            <person name="Groot G.S.P."/>
            <person name="de Groot P.W.J."/>
            <person name="Guillemette T."/>
            <person name="Henrissat B."/>
            <person name="Herweijer M."/>
            <person name="van den Hombergh J.P.T.W."/>
            <person name="van den Hondel C.A.M.J.J."/>
            <person name="van der Heijden R.T.J.M."/>
            <person name="van der Kaaij R.M."/>
            <person name="Klis F.M."/>
            <person name="Kools H.J."/>
            <person name="Kubicek C.P."/>
            <person name="van Kuyk P.A."/>
            <person name="Lauber J."/>
            <person name="Lu X."/>
            <person name="van der Maarel M.J.E.C."/>
            <person name="Meulenberg R."/>
            <person name="Menke H."/>
            <person name="Mortimer M.A."/>
            <person name="Nielsen J."/>
            <person name="Oliver S.G."/>
            <person name="Olsthoorn M."/>
            <person name="Pal K."/>
            <person name="van Peij N.N.M.E."/>
            <person name="Ram A.F.J."/>
            <person name="Rinas U."/>
            <person name="Roubos J.A."/>
            <person name="Sagt C.M.J."/>
            <person name="Schmoll M."/>
            <person name="Sun J."/>
            <person name="Ussery D."/>
            <person name="Varga J."/>
            <person name="Vervecken W."/>
            <person name="van de Vondervoort P.J.J."/>
            <person name="Wedler H."/>
            <person name="Woesten H.A.B."/>
            <person name="Zeng A.-P."/>
            <person name="van Ooyen A.J.J."/>
            <person name="Visser J."/>
            <person name="Stam H."/>
        </authorList>
    </citation>
    <scope>NUCLEOTIDE SEQUENCE [LARGE SCALE GENOMIC DNA]</scope>
    <source>
        <strain>ATCC MYA-4892 / CBS 513.88 / FGSC A1513</strain>
    </source>
</reference>
<keyword id="KW-0963">Cytoplasm</keyword>
<keyword id="KW-0349">Heme</keyword>
<keyword id="KW-0376">Hydrogen peroxide</keyword>
<keyword id="KW-0408">Iron</keyword>
<keyword id="KW-0479">Metal-binding</keyword>
<keyword id="KW-0560">Oxidoreductase</keyword>
<keyword id="KW-0575">Peroxidase</keyword>
<keyword id="KW-1185">Reference proteome</keyword>
<protein>
    <recommendedName>
        <fullName evidence="1">Catalase-peroxidase</fullName>
        <shortName evidence="1">CP</shortName>
        <ecNumber evidence="1">1.11.1.21</ecNumber>
    </recommendedName>
    <alternativeName>
        <fullName evidence="1">Peroxidase/catalase</fullName>
    </alternativeName>
</protein>
<name>KATG_ASPNC</name>
<evidence type="ECO:0000255" key="1">
    <source>
        <dbReference type="HAMAP-Rule" id="MF_03108"/>
    </source>
</evidence>
<evidence type="ECO:0000256" key="2">
    <source>
        <dbReference type="SAM" id="MobiDB-lite"/>
    </source>
</evidence>
<comment type="function">
    <text evidence="1">Bifunctional enzyme with both catalase and broad-spectrum peroxidase activity.</text>
</comment>
<comment type="catalytic activity">
    <reaction evidence="1">
        <text>H2O2 + AH2 = A + 2 H2O</text>
        <dbReference type="Rhea" id="RHEA:30275"/>
        <dbReference type="ChEBI" id="CHEBI:13193"/>
        <dbReference type="ChEBI" id="CHEBI:15377"/>
        <dbReference type="ChEBI" id="CHEBI:16240"/>
        <dbReference type="ChEBI" id="CHEBI:17499"/>
        <dbReference type="EC" id="1.11.1.21"/>
    </reaction>
</comment>
<comment type="catalytic activity">
    <reaction evidence="1">
        <text>2 H2O2 = O2 + 2 H2O</text>
        <dbReference type="Rhea" id="RHEA:20309"/>
        <dbReference type="ChEBI" id="CHEBI:15377"/>
        <dbReference type="ChEBI" id="CHEBI:15379"/>
        <dbReference type="ChEBI" id="CHEBI:16240"/>
        <dbReference type="EC" id="1.11.1.21"/>
    </reaction>
</comment>
<comment type="cofactor">
    <cofactor evidence="1">
        <name>heme b</name>
        <dbReference type="ChEBI" id="CHEBI:60344"/>
    </cofactor>
    <text evidence="1">Binds 1 heme b (iron(II)-protoporphyrin IX) group per monomer.</text>
</comment>
<comment type="subunit">
    <text evidence="1">Homodimer or homotetramer.</text>
</comment>
<comment type="subcellular location">
    <subcellularLocation>
        <location evidence="1">Cytoplasm</location>
    </subcellularLocation>
</comment>
<comment type="PTM">
    <text evidence="1">Formation of the three residue Trp-Tyr-Met cross-link is important for the catalase, but not the peroxidase activity of the enzyme.</text>
</comment>
<comment type="similarity">
    <text evidence="1">Belongs to the peroxidase family. Peroxidase/catalase subfamily.</text>
</comment>
<dbReference type="EC" id="1.11.1.21" evidence="1"/>
<dbReference type="EMBL" id="AM269954">
    <property type="protein sequence ID" value="CAK43554.1"/>
    <property type="molecule type" value="Genomic_DNA"/>
</dbReference>
<dbReference type="RefSeq" id="XP_001388622.1">
    <property type="nucleotide sequence ID" value="XM_001388585.2"/>
</dbReference>
<dbReference type="SMR" id="A2Q7T1"/>
<dbReference type="PeroxiBase" id="5224">
    <property type="entry name" value="AnCP01"/>
</dbReference>
<dbReference type="EnsemblFungi" id="CAK43554">
    <property type="protein sequence ID" value="CAK43554"/>
    <property type="gene ID" value="An01g01830"/>
</dbReference>
<dbReference type="GeneID" id="4977099"/>
<dbReference type="KEGG" id="ang:An01g01830"/>
<dbReference type="VEuPathDB" id="FungiDB:An01g01830"/>
<dbReference type="HOGENOM" id="CLU_025424_2_0_1"/>
<dbReference type="Proteomes" id="UP000006706">
    <property type="component" value="Chromosome 2R"/>
</dbReference>
<dbReference type="GO" id="GO:0005829">
    <property type="term" value="C:cytosol"/>
    <property type="evidence" value="ECO:0007669"/>
    <property type="project" value="TreeGrafter"/>
</dbReference>
<dbReference type="GO" id="GO:0004096">
    <property type="term" value="F:catalase activity"/>
    <property type="evidence" value="ECO:0007669"/>
    <property type="project" value="UniProtKB-UniRule"/>
</dbReference>
<dbReference type="GO" id="GO:0020037">
    <property type="term" value="F:heme binding"/>
    <property type="evidence" value="ECO:0007669"/>
    <property type="project" value="InterPro"/>
</dbReference>
<dbReference type="GO" id="GO:0046872">
    <property type="term" value="F:metal ion binding"/>
    <property type="evidence" value="ECO:0007669"/>
    <property type="project" value="UniProtKB-KW"/>
</dbReference>
<dbReference type="GO" id="GO:0070301">
    <property type="term" value="P:cellular response to hydrogen peroxide"/>
    <property type="evidence" value="ECO:0007669"/>
    <property type="project" value="TreeGrafter"/>
</dbReference>
<dbReference type="GO" id="GO:0042744">
    <property type="term" value="P:hydrogen peroxide catabolic process"/>
    <property type="evidence" value="ECO:0007669"/>
    <property type="project" value="UniProtKB-KW"/>
</dbReference>
<dbReference type="CDD" id="cd00649">
    <property type="entry name" value="catalase_peroxidase_1"/>
    <property type="match status" value="1"/>
</dbReference>
<dbReference type="CDD" id="cd08200">
    <property type="entry name" value="catalase_peroxidase_2"/>
    <property type="match status" value="1"/>
</dbReference>
<dbReference type="FunFam" id="1.10.420.10:FF:000002">
    <property type="entry name" value="Catalase-peroxidase"/>
    <property type="match status" value="1"/>
</dbReference>
<dbReference type="FunFam" id="1.10.420.10:FF:000004">
    <property type="entry name" value="Catalase-peroxidase"/>
    <property type="match status" value="1"/>
</dbReference>
<dbReference type="FunFam" id="1.10.520.10:FF:000002">
    <property type="entry name" value="Catalase-peroxidase"/>
    <property type="match status" value="1"/>
</dbReference>
<dbReference type="Gene3D" id="1.10.520.10">
    <property type="match status" value="2"/>
</dbReference>
<dbReference type="Gene3D" id="1.10.420.10">
    <property type="entry name" value="Peroxidase, domain 2"/>
    <property type="match status" value="2"/>
</dbReference>
<dbReference type="HAMAP" id="MF_01961">
    <property type="entry name" value="Catal_peroxid"/>
    <property type="match status" value="1"/>
</dbReference>
<dbReference type="InterPro" id="IPR000763">
    <property type="entry name" value="Catalase_peroxidase"/>
</dbReference>
<dbReference type="InterPro" id="IPR002016">
    <property type="entry name" value="Haem_peroxidase"/>
</dbReference>
<dbReference type="InterPro" id="IPR010255">
    <property type="entry name" value="Haem_peroxidase_sf"/>
</dbReference>
<dbReference type="InterPro" id="IPR019794">
    <property type="entry name" value="Peroxidases_AS"/>
</dbReference>
<dbReference type="InterPro" id="IPR019793">
    <property type="entry name" value="Peroxidases_heam-ligand_BS"/>
</dbReference>
<dbReference type="NCBIfam" id="TIGR00198">
    <property type="entry name" value="cat_per_HPI"/>
    <property type="match status" value="1"/>
</dbReference>
<dbReference type="NCBIfam" id="NF011635">
    <property type="entry name" value="PRK15061.1"/>
    <property type="match status" value="1"/>
</dbReference>
<dbReference type="PANTHER" id="PTHR30555:SF0">
    <property type="entry name" value="CATALASE-PEROXIDASE"/>
    <property type="match status" value="1"/>
</dbReference>
<dbReference type="PANTHER" id="PTHR30555">
    <property type="entry name" value="HYDROPEROXIDASE I, BIFUNCTIONAL CATALASE-PEROXIDASE"/>
    <property type="match status" value="1"/>
</dbReference>
<dbReference type="Pfam" id="PF00141">
    <property type="entry name" value="peroxidase"/>
    <property type="match status" value="2"/>
</dbReference>
<dbReference type="PRINTS" id="PR00460">
    <property type="entry name" value="BPEROXIDASE"/>
</dbReference>
<dbReference type="PRINTS" id="PR00458">
    <property type="entry name" value="PEROXIDASE"/>
</dbReference>
<dbReference type="SUPFAM" id="SSF48113">
    <property type="entry name" value="Heme-dependent peroxidases"/>
    <property type="match status" value="2"/>
</dbReference>
<dbReference type="PROSITE" id="PS00435">
    <property type="entry name" value="PEROXIDASE_1"/>
    <property type="match status" value="1"/>
</dbReference>
<dbReference type="PROSITE" id="PS00436">
    <property type="entry name" value="PEROXIDASE_2"/>
    <property type="match status" value="1"/>
</dbReference>
<dbReference type="PROSITE" id="PS50873">
    <property type="entry name" value="PEROXIDASE_4"/>
    <property type="match status" value="1"/>
</dbReference>
<feature type="chain" id="PRO_0000354101" description="Catalase-peroxidase">
    <location>
        <begin position="1"/>
        <end position="762"/>
    </location>
</feature>
<feature type="region of interest" description="Disordered" evidence="2">
    <location>
        <begin position="1"/>
        <end position="22"/>
    </location>
</feature>
<feature type="active site" description="Proton acceptor" evidence="1">
    <location>
        <position position="97"/>
    </location>
</feature>
<feature type="binding site" description="axial binding residue" evidence="1">
    <location>
        <position position="283"/>
    </location>
    <ligand>
        <name>heme b</name>
        <dbReference type="ChEBI" id="CHEBI:60344"/>
    </ligand>
    <ligandPart>
        <name>Fe</name>
        <dbReference type="ChEBI" id="CHEBI:18248"/>
    </ligandPart>
</feature>
<feature type="site" description="Transition state stabilizer" evidence="1">
    <location>
        <position position="93"/>
    </location>
</feature>
<feature type="cross-link" description="Tryptophyl-tyrosyl-methioninium (Trp-Tyr) (with M-268)" evidence="1">
    <location>
        <begin position="96"/>
        <end position="242"/>
    </location>
</feature>
<feature type="cross-link" description="Tryptophyl-tyrosyl-methioninium (Tyr-Met) (with W-96)" evidence="1">
    <location>
        <begin position="242"/>
        <end position="268"/>
    </location>
</feature>